<dbReference type="EMBL" id="CP001277">
    <property type="protein sequence ID" value="ACQ67095.1"/>
    <property type="molecule type" value="Genomic_DNA"/>
</dbReference>
<dbReference type="SMR" id="C4K3F2"/>
<dbReference type="STRING" id="572265.HDEF_0333"/>
<dbReference type="KEGG" id="hde:HDEF_0333"/>
<dbReference type="eggNOG" id="COG0779">
    <property type="taxonomic scope" value="Bacteria"/>
</dbReference>
<dbReference type="HOGENOM" id="CLU_070525_1_1_6"/>
<dbReference type="Proteomes" id="UP000002334">
    <property type="component" value="Chromosome"/>
</dbReference>
<dbReference type="GO" id="GO:0005829">
    <property type="term" value="C:cytosol"/>
    <property type="evidence" value="ECO:0007669"/>
    <property type="project" value="TreeGrafter"/>
</dbReference>
<dbReference type="GO" id="GO:0000028">
    <property type="term" value="P:ribosomal small subunit assembly"/>
    <property type="evidence" value="ECO:0007669"/>
    <property type="project" value="TreeGrafter"/>
</dbReference>
<dbReference type="GO" id="GO:0006412">
    <property type="term" value="P:translation"/>
    <property type="evidence" value="ECO:0007669"/>
    <property type="project" value="TreeGrafter"/>
</dbReference>
<dbReference type="CDD" id="cd01734">
    <property type="entry name" value="YlxS_C"/>
    <property type="match status" value="1"/>
</dbReference>
<dbReference type="FunFam" id="2.30.30.180:FF:000001">
    <property type="entry name" value="Ribosome maturation factor RimP"/>
    <property type="match status" value="1"/>
</dbReference>
<dbReference type="FunFam" id="3.30.300.70:FF:000001">
    <property type="entry name" value="Ribosome maturation factor RimP"/>
    <property type="match status" value="1"/>
</dbReference>
<dbReference type="Gene3D" id="2.30.30.180">
    <property type="entry name" value="Ribosome maturation factor RimP, C-terminal domain"/>
    <property type="match status" value="1"/>
</dbReference>
<dbReference type="Gene3D" id="3.30.300.70">
    <property type="entry name" value="RimP-like superfamily, N-terminal"/>
    <property type="match status" value="1"/>
</dbReference>
<dbReference type="HAMAP" id="MF_01077">
    <property type="entry name" value="RimP"/>
    <property type="match status" value="1"/>
</dbReference>
<dbReference type="InterPro" id="IPR003728">
    <property type="entry name" value="Ribosome_maturation_RimP"/>
</dbReference>
<dbReference type="InterPro" id="IPR028998">
    <property type="entry name" value="RimP_C"/>
</dbReference>
<dbReference type="InterPro" id="IPR036847">
    <property type="entry name" value="RimP_C_sf"/>
</dbReference>
<dbReference type="InterPro" id="IPR028989">
    <property type="entry name" value="RimP_N"/>
</dbReference>
<dbReference type="InterPro" id="IPR035956">
    <property type="entry name" value="RimP_N_sf"/>
</dbReference>
<dbReference type="NCBIfam" id="NF000927">
    <property type="entry name" value="PRK00092.1-1"/>
    <property type="match status" value="1"/>
</dbReference>
<dbReference type="PANTHER" id="PTHR33867">
    <property type="entry name" value="RIBOSOME MATURATION FACTOR RIMP"/>
    <property type="match status" value="1"/>
</dbReference>
<dbReference type="PANTHER" id="PTHR33867:SF1">
    <property type="entry name" value="RIBOSOME MATURATION FACTOR RIMP"/>
    <property type="match status" value="1"/>
</dbReference>
<dbReference type="Pfam" id="PF17384">
    <property type="entry name" value="DUF150_C"/>
    <property type="match status" value="1"/>
</dbReference>
<dbReference type="Pfam" id="PF02576">
    <property type="entry name" value="RimP_N"/>
    <property type="match status" value="1"/>
</dbReference>
<dbReference type="SUPFAM" id="SSF74942">
    <property type="entry name" value="YhbC-like, C-terminal domain"/>
    <property type="match status" value="1"/>
</dbReference>
<dbReference type="SUPFAM" id="SSF75420">
    <property type="entry name" value="YhbC-like, N-terminal domain"/>
    <property type="match status" value="1"/>
</dbReference>
<organism>
    <name type="scientific">Hamiltonella defensa subsp. Acyrthosiphon pisum (strain 5AT)</name>
    <dbReference type="NCBI Taxonomy" id="572265"/>
    <lineage>
        <taxon>Bacteria</taxon>
        <taxon>Pseudomonadati</taxon>
        <taxon>Pseudomonadota</taxon>
        <taxon>Gammaproteobacteria</taxon>
        <taxon>Enterobacterales</taxon>
        <taxon>Enterobacteriaceae</taxon>
        <taxon>aphid secondary symbionts</taxon>
        <taxon>Candidatus Hamiltonella</taxon>
    </lineage>
</organism>
<proteinExistence type="inferred from homology"/>
<accession>C4K3F2</accession>
<gene>
    <name evidence="1" type="primary">rimP</name>
    <name type="ordered locus">HDEF_0333</name>
</gene>
<name>RIMP_HAMD5</name>
<reference key="1">
    <citation type="journal article" date="2009" name="Proc. Natl. Acad. Sci. U.S.A.">
        <title>Hamiltonella defensa, genome evolution of protective bacterial endosymbiont from pathogenic ancestors.</title>
        <authorList>
            <person name="Degnan P.H."/>
            <person name="Yu Y."/>
            <person name="Sisneros N."/>
            <person name="Wing R.A."/>
            <person name="Moran N.A."/>
        </authorList>
    </citation>
    <scope>NUCLEOTIDE SEQUENCE [LARGE SCALE GENOMIC DNA]</scope>
    <source>
        <strain>5AT</strain>
    </source>
</reference>
<evidence type="ECO:0000255" key="1">
    <source>
        <dbReference type="HAMAP-Rule" id="MF_01077"/>
    </source>
</evidence>
<sequence>MRSVGLSILVKKLKKIITAPVEGLGYELVGIEFIQSRQSVLRIYIDHEEGVTVDSCADVSKEVSLVLDVEDPITVPYNLEISSPGLDRPLFTARHYAQFIGEKVNLMLRMAIQNQRKWQGIIKSVDGESIIVAVNQKDEVFALSNIQKANLVPHF</sequence>
<keyword id="KW-0963">Cytoplasm</keyword>
<keyword id="KW-0690">Ribosome biogenesis</keyword>
<protein>
    <recommendedName>
        <fullName evidence="1">Ribosome maturation factor RimP</fullName>
    </recommendedName>
</protein>
<comment type="function">
    <text evidence="1">Required for maturation of 30S ribosomal subunits.</text>
</comment>
<comment type="subcellular location">
    <subcellularLocation>
        <location evidence="1">Cytoplasm</location>
    </subcellularLocation>
</comment>
<comment type="similarity">
    <text evidence="1">Belongs to the RimP family.</text>
</comment>
<feature type="chain" id="PRO_0000384680" description="Ribosome maturation factor RimP">
    <location>
        <begin position="1"/>
        <end position="155"/>
    </location>
</feature>